<feature type="chain" id="PRO_1000136822" description="Probable tRNA pseudouridine synthase B">
    <location>
        <begin position="1"/>
        <end position="301"/>
    </location>
</feature>
<feature type="domain" description="PUA" evidence="1">
    <location>
        <begin position="227"/>
        <end position="301"/>
    </location>
</feature>
<feature type="active site" description="Nucleophile" evidence="1">
    <location>
        <position position="54"/>
    </location>
</feature>
<comment type="function">
    <text evidence="1">Could be responsible for synthesis of pseudouridine from uracil-55 in the psi GC loop of transfer RNAs.</text>
</comment>
<comment type="catalytic activity">
    <reaction evidence="1">
        <text>uridine(55) in tRNA = pseudouridine(55) in tRNA</text>
        <dbReference type="Rhea" id="RHEA:42532"/>
        <dbReference type="Rhea" id="RHEA-COMP:10101"/>
        <dbReference type="Rhea" id="RHEA-COMP:10102"/>
        <dbReference type="ChEBI" id="CHEBI:65314"/>
        <dbReference type="ChEBI" id="CHEBI:65315"/>
        <dbReference type="EC" id="5.4.99.25"/>
    </reaction>
</comment>
<comment type="similarity">
    <text evidence="1">Belongs to the pseudouridine synthase TruB family. Type 2 subfamily.</text>
</comment>
<accession>B0R686</accession>
<keyword id="KW-0413">Isomerase</keyword>
<keyword id="KW-0819">tRNA processing</keyword>
<name>TRUB_HALS3</name>
<evidence type="ECO:0000255" key="1">
    <source>
        <dbReference type="HAMAP-Rule" id="MF_01081"/>
    </source>
</evidence>
<protein>
    <recommendedName>
        <fullName evidence="1">Probable tRNA pseudouridine synthase B</fullName>
        <ecNumber evidence="1">5.4.99.25</ecNumber>
    </recommendedName>
    <alternativeName>
        <fullName evidence="1">tRNA pseudouridine(55) synthase</fullName>
        <shortName evidence="1">Psi55 synthase</shortName>
    </alternativeName>
    <alternativeName>
        <fullName evidence="1">tRNA pseudouridylate synthase</fullName>
    </alternativeName>
    <alternativeName>
        <fullName evidence="1">tRNA-uridine isomerase</fullName>
    </alternativeName>
</protein>
<organism>
    <name type="scientific">Halobacterium salinarum (strain ATCC 29341 / DSM 671 / R1)</name>
    <dbReference type="NCBI Taxonomy" id="478009"/>
    <lineage>
        <taxon>Archaea</taxon>
        <taxon>Methanobacteriati</taxon>
        <taxon>Methanobacteriota</taxon>
        <taxon>Stenosarchaea group</taxon>
        <taxon>Halobacteria</taxon>
        <taxon>Halobacteriales</taxon>
        <taxon>Halobacteriaceae</taxon>
        <taxon>Halobacterium</taxon>
        <taxon>Halobacterium salinarum NRC-34001</taxon>
    </lineage>
</organism>
<gene>
    <name evidence="1" type="primary">truB</name>
    <name type="ordered locus">OE_3430F</name>
</gene>
<proteinExistence type="inferred from homology"/>
<sequence length="301" mass="31825">MGIRPPPGERSPAAVLSFGVVNLDKPPGPSAHQVSAWIRDLVGVEKAAHAGTLDPKVTGCLPVLTGTATRIAPALLEGFKEYVAVLELHDDPPRILPDVIEAFTGEIYQKPPKKSAVARRLRTRTVYDLDVLDVDGRQVLLRIRCESGTYIRKLCHDIGRALGTNAHMGHLRRSATTPFDDTDLVTLHDLADAVAWLRDTDDTEPPDAPADALRAAVQPAERALTHLPRLTIADSAAHEVATGAPVYAPGVIDTTALPTPPADGALVACYTAGGTAVCLGRLVGDPDADAGVVVALERVLV</sequence>
<dbReference type="EC" id="5.4.99.25" evidence="1"/>
<dbReference type="EMBL" id="AM774415">
    <property type="protein sequence ID" value="CAP14255.1"/>
    <property type="molecule type" value="Genomic_DNA"/>
</dbReference>
<dbReference type="RefSeq" id="WP_012289369.1">
    <property type="nucleotide sequence ID" value="NC_010364.1"/>
</dbReference>
<dbReference type="SMR" id="B0R686"/>
<dbReference type="EnsemblBacteria" id="CAP14255">
    <property type="protein sequence ID" value="CAP14255"/>
    <property type="gene ID" value="OE_3430F"/>
</dbReference>
<dbReference type="KEGG" id="hsl:OE_3430F"/>
<dbReference type="HOGENOM" id="CLU_032087_3_0_2"/>
<dbReference type="PhylomeDB" id="B0R686"/>
<dbReference type="Proteomes" id="UP000001321">
    <property type="component" value="Chromosome"/>
</dbReference>
<dbReference type="GO" id="GO:0003723">
    <property type="term" value="F:RNA binding"/>
    <property type="evidence" value="ECO:0007669"/>
    <property type="project" value="InterPro"/>
</dbReference>
<dbReference type="GO" id="GO:0160148">
    <property type="term" value="F:tRNA pseudouridine(55) synthase activity"/>
    <property type="evidence" value="ECO:0007669"/>
    <property type="project" value="UniProtKB-EC"/>
</dbReference>
<dbReference type="GO" id="GO:0000495">
    <property type="term" value="P:box H/ACA sno(s)RNA 3'-end processing"/>
    <property type="evidence" value="ECO:0007669"/>
    <property type="project" value="TreeGrafter"/>
</dbReference>
<dbReference type="GO" id="GO:1990481">
    <property type="term" value="P:mRNA pseudouridine synthesis"/>
    <property type="evidence" value="ECO:0007669"/>
    <property type="project" value="TreeGrafter"/>
</dbReference>
<dbReference type="GO" id="GO:0031118">
    <property type="term" value="P:rRNA pseudouridine synthesis"/>
    <property type="evidence" value="ECO:0007669"/>
    <property type="project" value="TreeGrafter"/>
</dbReference>
<dbReference type="GO" id="GO:0031120">
    <property type="term" value="P:snRNA pseudouridine synthesis"/>
    <property type="evidence" value="ECO:0007669"/>
    <property type="project" value="TreeGrafter"/>
</dbReference>
<dbReference type="GO" id="GO:0031119">
    <property type="term" value="P:tRNA pseudouridine synthesis"/>
    <property type="evidence" value="ECO:0007669"/>
    <property type="project" value="UniProtKB-UniRule"/>
</dbReference>
<dbReference type="CDD" id="cd02572">
    <property type="entry name" value="PseudoU_synth_hDyskerin"/>
    <property type="match status" value="1"/>
</dbReference>
<dbReference type="CDD" id="cd21148">
    <property type="entry name" value="PUA_Cbf5"/>
    <property type="match status" value="1"/>
</dbReference>
<dbReference type="FunFam" id="3.30.2350.10:FF:000001">
    <property type="entry name" value="H/ACA ribonucleoprotein complex subunit CBF5"/>
    <property type="match status" value="1"/>
</dbReference>
<dbReference type="Gene3D" id="3.30.2350.10">
    <property type="entry name" value="Pseudouridine synthase"/>
    <property type="match status" value="1"/>
</dbReference>
<dbReference type="Gene3D" id="2.30.130.10">
    <property type="entry name" value="PUA domain"/>
    <property type="match status" value="1"/>
</dbReference>
<dbReference type="HAMAP" id="MF_01081">
    <property type="entry name" value="TruB_arch"/>
    <property type="match status" value="1"/>
</dbReference>
<dbReference type="InterPro" id="IPR012960">
    <property type="entry name" value="Dyskerin-like"/>
</dbReference>
<dbReference type="InterPro" id="IPR020103">
    <property type="entry name" value="PsdUridine_synth_cat_dom_sf"/>
</dbReference>
<dbReference type="InterPro" id="IPR002501">
    <property type="entry name" value="PsdUridine_synth_N"/>
</dbReference>
<dbReference type="InterPro" id="IPR015947">
    <property type="entry name" value="PUA-like_sf"/>
</dbReference>
<dbReference type="InterPro" id="IPR036974">
    <property type="entry name" value="PUA_sf"/>
</dbReference>
<dbReference type="InterPro" id="IPR004802">
    <property type="entry name" value="tRNA_PsdUridine_synth_B_fam"/>
</dbReference>
<dbReference type="InterPro" id="IPR026326">
    <property type="entry name" value="TruB_arch"/>
</dbReference>
<dbReference type="InterPro" id="IPR032819">
    <property type="entry name" value="TruB_C"/>
</dbReference>
<dbReference type="NCBIfam" id="TIGR00425">
    <property type="entry name" value="CBF5"/>
    <property type="match status" value="1"/>
</dbReference>
<dbReference type="NCBIfam" id="NF003280">
    <property type="entry name" value="PRK04270.1"/>
    <property type="match status" value="1"/>
</dbReference>
<dbReference type="PANTHER" id="PTHR23127">
    <property type="entry name" value="CENTROMERE/MICROTUBULE BINDING PROTEIN CBF5"/>
    <property type="match status" value="1"/>
</dbReference>
<dbReference type="PANTHER" id="PTHR23127:SF0">
    <property type="entry name" value="H_ACA RIBONUCLEOPROTEIN COMPLEX SUBUNIT DKC1"/>
    <property type="match status" value="1"/>
</dbReference>
<dbReference type="Pfam" id="PF16198">
    <property type="entry name" value="TruB_C_2"/>
    <property type="match status" value="1"/>
</dbReference>
<dbReference type="Pfam" id="PF01509">
    <property type="entry name" value="TruB_N"/>
    <property type="match status" value="2"/>
</dbReference>
<dbReference type="SMART" id="SM01136">
    <property type="entry name" value="DKCLD"/>
    <property type="match status" value="1"/>
</dbReference>
<dbReference type="SUPFAM" id="SSF55120">
    <property type="entry name" value="Pseudouridine synthase"/>
    <property type="match status" value="1"/>
</dbReference>
<dbReference type="SUPFAM" id="SSF88697">
    <property type="entry name" value="PUA domain-like"/>
    <property type="match status" value="1"/>
</dbReference>
<dbReference type="PROSITE" id="PS50890">
    <property type="entry name" value="PUA"/>
    <property type="match status" value="1"/>
</dbReference>
<reference key="1">
    <citation type="journal article" date="2008" name="Genomics">
        <title>Evolution in the laboratory: the genome of Halobacterium salinarum strain R1 compared to that of strain NRC-1.</title>
        <authorList>
            <person name="Pfeiffer F."/>
            <person name="Schuster S.C."/>
            <person name="Broicher A."/>
            <person name="Falb M."/>
            <person name="Palm P."/>
            <person name="Rodewald K."/>
            <person name="Ruepp A."/>
            <person name="Soppa J."/>
            <person name="Tittor J."/>
            <person name="Oesterhelt D."/>
        </authorList>
    </citation>
    <scope>NUCLEOTIDE SEQUENCE [LARGE SCALE GENOMIC DNA]</scope>
    <source>
        <strain>ATCC 29341 / DSM 671 / R1</strain>
    </source>
</reference>